<reference key="1">
    <citation type="journal article" date="2003" name="Nature">
        <title>The genome sequence of Bacillus anthracis Ames and comparison to closely related bacteria.</title>
        <authorList>
            <person name="Read T.D."/>
            <person name="Peterson S.N."/>
            <person name="Tourasse N.J."/>
            <person name="Baillie L.W."/>
            <person name="Paulsen I.T."/>
            <person name="Nelson K.E."/>
            <person name="Tettelin H."/>
            <person name="Fouts D.E."/>
            <person name="Eisen J.A."/>
            <person name="Gill S.R."/>
            <person name="Holtzapple E.K."/>
            <person name="Okstad O.A."/>
            <person name="Helgason E."/>
            <person name="Rilstone J."/>
            <person name="Wu M."/>
            <person name="Kolonay J.F."/>
            <person name="Beanan M.J."/>
            <person name="Dodson R.J."/>
            <person name="Brinkac L.M."/>
            <person name="Gwinn M.L."/>
            <person name="DeBoy R.T."/>
            <person name="Madpu R."/>
            <person name="Daugherty S.C."/>
            <person name="Durkin A.S."/>
            <person name="Haft D.H."/>
            <person name="Nelson W.C."/>
            <person name="Peterson J.D."/>
            <person name="Pop M."/>
            <person name="Khouri H.M."/>
            <person name="Radune D."/>
            <person name="Benton J.L."/>
            <person name="Mahamoud Y."/>
            <person name="Jiang L."/>
            <person name="Hance I.R."/>
            <person name="Weidman J.F."/>
            <person name="Berry K.J."/>
            <person name="Plaut R.D."/>
            <person name="Wolf A.M."/>
            <person name="Watkins K.L."/>
            <person name="Nierman W.C."/>
            <person name="Hazen A."/>
            <person name="Cline R.T."/>
            <person name="Redmond C."/>
            <person name="Thwaite J.E."/>
            <person name="White O."/>
            <person name="Salzberg S.L."/>
            <person name="Thomason B."/>
            <person name="Friedlander A.M."/>
            <person name="Koehler T.M."/>
            <person name="Hanna P.C."/>
            <person name="Kolstoe A.-B."/>
            <person name="Fraser C.M."/>
        </authorList>
    </citation>
    <scope>NUCLEOTIDE SEQUENCE [LARGE SCALE GENOMIC DNA]</scope>
    <source>
        <strain>Ames / isolate Porton</strain>
    </source>
</reference>
<reference key="2">
    <citation type="journal article" date="2009" name="J. Bacteriol.">
        <title>The complete genome sequence of Bacillus anthracis Ames 'Ancestor'.</title>
        <authorList>
            <person name="Ravel J."/>
            <person name="Jiang L."/>
            <person name="Stanley S.T."/>
            <person name="Wilson M.R."/>
            <person name="Decker R.S."/>
            <person name="Read T.D."/>
            <person name="Worsham P."/>
            <person name="Keim P.S."/>
            <person name="Salzberg S.L."/>
            <person name="Fraser-Liggett C.M."/>
            <person name="Rasko D.A."/>
        </authorList>
    </citation>
    <scope>NUCLEOTIDE SEQUENCE [LARGE SCALE GENOMIC DNA]</scope>
    <source>
        <strain>Ames ancestor</strain>
    </source>
</reference>
<reference key="3">
    <citation type="submission" date="2004-01" db="EMBL/GenBank/DDBJ databases">
        <title>Complete genome sequence of Bacillus anthracis Sterne.</title>
        <authorList>
            <person name="Brettin T.S."/>
            <person name="Bruce D."/>
            <person name="Challacombe J.F."/>
            <person name="Gilna P."/>
            <person name="Han C."/>
            <person name="Hill K."/>
            <person name="Hitchcock P."/>
            <person name="Jackson P."/>
            <person name="Keim P."/>
            <person name="Longmire J."/>
            <person name="Lucas S."/>
            <person name="Okinaka R."/>
            <person name="Richardson P."/>
            <person name="Rubin E."/>
            <person name="Tice H."/>
        </authorList>
    </citation>
    <scope>NUCLEOTIDE SEQUENCE [LARGE SCALE GENOMIC DNA]</scope>
    <source>
        <strain>Sterne</strain>
    </source>
</reference>
<comment type="function">
    <text evidence="1">One of several proteins that assist in the late maturation steps of the functional core of the 30S ribosomal subunit. Helps release RbfA from mature subunits. May play a role in the assembly of ribosomal proteins into the subunit. Circularly permuted GTPase that catalyzes slow GTP hydrolysis, GTPase activity is stimulated by the 30S ribosomal subunit.</text>
</comment>
<comment type="cofactor">
    <cofactor evidence="1">
        <name>Zn(2+)</name>
        <dbReference type="ChEBI" id="CHEBI:29105"/>
    </cofactor>
    <text evidence="1">Binds 1 zinc ion per subunit.</text>
</comment>
<comment type="subunit">
    <text evidence="1">Monomer. Associates with 30S ribosomal subunit, binds 16S rRNA.</text>
</comment>
<comment type="subcellular location">
    <subcellularLocation>
        <location evidence="1">Cytoplasm</location>
    </subcellularLocation>
</comment>
<comment type="similarity">
    <text evidence="1">Belongs to the TRAFAC class YlqF/YawG GTPase family. RsgA subfamily.</text>
</comment>
<proteinExistence type="inferred from homology"/>
<accession>Q81WH7</accession>
<accession>Q6HUM5</accession>
<accession>Q6KNV9</accession>
<organism>
    <name type="scientific">Bacillus anthracis</name>
    <dbReference type="NCBI Taxonomy" id="1392"/>
    <lineage>
        <taxon>Bacteria</taxon>
        <taxon>Bacillati</taxon>
        <taxon>Bacillota</taxon>
        <taxon>Bacilli</taxon>
        <taxon>Bacillales</taxon>
        <taxon>Bacillaceae</taxon>
        <taxon>Bacillus</taxon>
        <taxon>Bacillus cereus group</taxon>
    </lineage>
</organism>
<gene>
    <name evidence="1" type="primary">rsgA</name>
    <name type="ordered locus">BA_3999</name>
    <name type="ordered locus">GBAA_3999</name>
    <name type="ordered locus">BAS3712</name>
</gene>
<keyword id="KW-0963">Cytoplasm</keyword>
<keyword id="KW-0342">GTP-binding</keyword>
<keyword id="KW-0378">Hydrolase</keyword>
<keyword id="KW-0479">Metal-binding</keyword>
<keyword id="KW-0547">Nucleotide-binding</keyword>
<keyword id="KW-1185">Reference proteome</keyword>
<keyword id="KW-0690">Ribosome biogenesis</keyword>
<keyword id="KW-0694">RNA-binding</keyword>
<keyword id="KW-0699">rRNA-binding</keyword>
<keyword id="KW-0862">Zinc</keyword>
<evidence type="ECO:0000255" key="1">
    <source>
        <dbReference type="HAMAP-Rule" id="MF_01820"/>
    </source>
</evidence>
<evidence type="ECO:0000255" key="2">
    <source>
        <dbReference type="PROSITE-ProRule" id="PRU01058"/>
    </source>
</evidence>
<protein>
    <recommendedName>
        <fullName evidence="1">Small ribosomal subunit biogenesis GTPase RsgA</fullName>
        <ecNumber evidence="1">3.6.1.-</ecNumber>
    </recommendedName>
</protein>
<dbReference type="EC" id="3.6.1.-" evidence="1"/>
<dbReference type="EMBL" id="AE016879">
    <property type="protein sequence ID" value="AAP27727.1"/>
    <property type="molecule type" value="Genomic_DNA"/>
</dbReference>
<dbReference type="EMBL" id="AE017334">
    <property type="protein sequence ID" value="AAT33114.1"/>
    <property type="molecule type" value="Genomic_DNA"/>
</dbReference>
<dbReference type="EMBL" id="AE017225">
    <property type="protein sequence ID" value="AAT56014.1"/>
    <property type="molecule type" value="Genomic_DNA"/>
</dbReference>
<dbReference type="RefSeq" id="NP_846241.1">
    <property type="nucleotide sequence ID" value="NC_003997.3"/>
</dbReference>
<dbReference type="RefSeq" id="WP_001113935.1">
    <property type="nucleotide sequence ID" value="NZ_WXXJ01000026.1"/>
</dbReference>
<dbReference type="RefSeq" id="YP_029963.1">
    <property type="nucleotide sequence ID" value="NC_005945.1"/>
</dbReference>
<dbReference type="SMR" id="Q81WH7"/>
<dbReference type="STRING" id="261594.GBAA_3999"/>
<dbReference type="DNASU" id="1086726"/>
<dbReference type="GeneID" id="45023690"/>
<dbReference type="KEGG" id="ban:BA_3999"/>
<dbReference type="KEGG" id="bar:GBAA_3999"/>
<dbReference type="KEGG" id="bat:BAS3712"/>
<dbReference type="PATRIC" id="fig|198094.11.peg.3969"/>
<dbReference type="eggNOG" id="COG1162">
    <property type="taxonomic scope" value="Bacteria"/>
</dbReference>
<dbReference type="HOGENOM" id="CLU_033617_2_1_9"/>
<dbReference type="OMA" id="CLVAAYD"/>
<dbReference type="OrthoDB" id="9809485at2"/>
<dbReference type="Proteomes" id="UP000000427">
    <property type="component" value="Chromosome"/>
</dbReference>
<dbReference type="Proteomes" id="UP000000594">
    <property type="component" value="Chromosome"/>
</dbReference>
<dbReference type="GO" id="GO:0005737">
    <property type="term" value="C:cytoplasm"/>
    <property type="evidence" value="ECO:0007669"/>
    <property type="project" value="UniProtKB-SubCell"/>
</dbReference>
<dbReference type="GO" id="GO:0005525">
    <property type="term" value="F:GTP binding"/>
    <property type="evidence" value="ECO:0007669"/>
    <property type="project" value="UniProtKB-UniRule"/>
</dbReference>
<dbReference type="GO" id="GO:0003924">
    <property type="term" value="F:GTPase activity"/>
    <property type="evidence" value="ECO:0007669"/>
    <property type="project" value="UniProtKB-UniRule"/>
</dbReference>
<dbReference type="GO" id="GO:0046872">
    <property type="term" value="F:metal ion binding"/>
    <property type="evidence" value="ECO:0007669"/>
    <property type="project" value="UniProtKB-KW"/>
</dbReference>
<dbReference type="GO" id="GO:0019843">
    <property type="term" value="F:rRNA binding"/>
    <property type="evidence" value="ECO:0007669"/>
    <property type="project" value="UniProtKB-KW"/>
</dbReference>
<dbReference type="GO" id="GO:0042274">
    <property type="term" value="P:ribosomal small subunit biogenesis"/>
    <property type="evidence" value="ECO:0007669"/>
    <property type="project" value="UniProtKB-UniRule"/>
</dbReference>
<dbReference type="CDD" id="cd04466">
    <property type="entry name" value="S1_YloQ_GTPase"/>
    <property type="match status" value="1"/>
</dbReference>
<dbReference type="CDD" id="cd01854">
    <property type="entry name" value="YjeQ_EngC"/>
    <property type="match status" value="1"/>
</dbReference>
<dbReference type="Gene3D" id="2.40.50.140">
    <property type="entry name" value="Nucleic acid-binding proteins"/>
    <property type="match status" value="1"/>
</dbReference>
<dbReference type="Gene3D" id="3.40.50.300">
    <property type="entry name" value="P-loop containing nucleotide triphosphate hydrolases"/>
    <property type="match status" value="1"/>
</dbReference>
<dbReference type="Gene3D" id="1.10.40.50">
    <property type="entry name" value="Probable gtpase engc, domain 3"/>
    <property type="match status" value="1"/>
</dbReference>
<dbReference type="HAMAP" id="MF_01820">
    <property type="entry name" value="GTPase_RsgA"/>
    <property type="match status" value="1"/>
</dbReference>
<dbReference type="InterPro" id="IPR030378">
    <property type="entry name" value="G_CP_dom"/>
</dbReference>
<dbReference type="InterPro" id="IPR012340">
    <property type="entry name" value="NA-bd_OB-fold"/>
</dbReference>
<dbReference type="InterPro" id="IPR027417">
    <property type="entry name" value="P-loop_NTPase"/>
</dbReference>
<dbReference type="InterPro" id="IPR004881">
    <property type="entry name" value="Ribosome_biogen_GTPase_RsgA"/>
</dbReference>
<dbReference type="InterPro" id="IPR010914">
    <property type="entry name" value="RsgA_GTPase_dom"/>
</dbReference>
<dbReference type="InterPro" id="IPR031944">
    <property type="entry name" value="RsgA_N"/>
</dbReference>
<dbReference type="NCBIfam" id="TIGR00157">
    <property type="entry name" value="ribosome small subunit-dependent GTPase A"/>
    <property type="match status" value="1"/>
</dbReference>
<dbReference type="PANTHER" id="PTHR32120">
    <property type="entry name" value="SMALL RIBOSOMAL SUBUNIT BIOGENESIS GTPASE RSGA"/>
    <property type="match status" value="1"/>
</dbReference>
<dbReference type="PANTHER" id="PTHR32120:SF11">
    <property type="entry name" value="SMALL RIBOSOMAL SUBUNIT BIOGENESIS GTPASE RSGA 1, MITOCHONDRIAL-RELATED"/>
    <property type="match status" value="1"/>
</dbReference>
<dbReference type="Pfam" id="PF03193">
    <property type="entry name" value="RsgA_GTPase"/>
    <property type="match status" value="1"/>
</dbReference>
<dbReference type="Pfam" id="PF16745">
    <property type="entry name" value="RsgA_N"/>
    <property type="match status" value="1"/>
</dbReference>
<dbReference type="SUPFAM" id="SSF50249">
    <property type="entry name" value="Nucleic acid-binding proteins"/>
    <property type="match status" value="1"/>
</dbReference>
<dbReference type="SUPFAM" id="SSF52540">
    <property type="entry name" value="P-loop containing nucleoside triphosphate hydrolases"/>
    <property type="match status" value="1"/>
</dbReference>
<dbReference type="PROSITE" id="PS50936">
    <property type="entry name" value="ENGC_GTPASE"/>
    <property type="match status" value="1"/>
</dbReference>
<dbReference type="PROSITE" id="PS51721">
    <property type="entry name" value="G_CP"/>
    <property type="match status" value="1"/>
</dbReference>
<feature type="chain" id="PRO_0000171460" description="Small ribosomal subunit biogenesis GTPase RsgA">
    <location>
        <begin position="1"/>
        <end position="293"/>
    </location>
</feature>
<feature type="domain" description="CP-type G" evidence="2">
    <location>
        <begin position="63"/>
        <end position="223"/>
    </location>
</feature>
<feature type="binding site" evidence="1">
    <location>
        <begin position="112"/>
        <end position="115"/>
    </location>
    <ligand>
        <name>GTP</name>
        <dbReference type="ChEBI" id="CHEBI:37565"/>
    </ligand>
</feature>
<feature type="binding site" evidence="1">
    <location>
        <begin position="166"/>
        <end position="174"/>
    </location>
    <ligand>
        <name>GTP</name>
        <dbReference type="ChEBI" id="CHEBI:37565"/>
    </ligand>
</feature>
<feature type="binding site" evidence="1">
    <location>
        <position position="247"/>
    </location>
    <ligand>
        <name>Zn(2+)</name>
        <dbReference type="ChEBI" id="CHEBI:29105"/>
    </ligand>
</feature>
<feature type="binding site" evidence="1">
    <location>
        <position position="252"/>
    </location>
    <ligand>
        <name>Zn(2+)</name>
        <dbReference type="ChEBI" id="CHEBI:29105"/>
    </ligand>
</feature>
<feature type="binding site" evidence="1">
    <location>
        <position position="254"/>
    </location>
    <ligand>
        <name>Zn(2+)</name>
        <dbReference type="ChEBI" id="CHEBI:29105"/>
    </ligand>
</feature>
<feature type="binding site" evidence="1">
    <location>
        <position position="260"/>
    </location>
    <ligand>
        <name>Zn(2+)</name>
        <dbReference type="ChEBI" id="CHEBI:29105"/>
    </ligand>
</feature>
<sequence length="293" mass="33132">MPEGKIVKALSGFYYVQHEEGITQCRGRGVFRKNKITPLVGDQVVFQADNPSEGYVLEVFDRKNELVRPPIANVDQAILVFSAVEPDFNPGLLDRFLVLIEYHNIKPIICISKMDLVDEKMRETVEAYANDYREMGYDVLFTSINTSESIDILKPFLEGCVSVVAGQSGVGKSSMLNVLRPELELKTNDISSHLGRGKHTTRHVELIAIGSGLVADTPGFSSLDFIDIEVEDLTYCFPELKEASQYCKFRGCTHLSEPKCAVKAAVEEGKITEYRYKNYKQFVEEIRERKPRY</sequence>
<name>RSGA_BACAN</name>